<feature type="chain" id="PRO_0000276086" description="Photosystem I reaction center subunit PsaK">
    <location>
        <begin position="1"/>
        <end position="86"/>
    </location>
</feature>
<feature type="transmembrane region" description="Helical" evidence="1">
    <location>
        <begin position="15"/>
        <end position="34"/>
    </location>
</feature>
<reference key="1">
    <citation type="submission" date="2003-11" db="EMBL/GenBank/DDBJ databases">
        <title>Whole genome sequence of Porphyra yezoensis chloroplast.</title>
        <authorList>
            <person name="Kunimoto M."/>
            <person name="Morishima K."/>
            <person name="Yoshikawa M."/>
            <person name="Fukuda S."/>
            <person name="Kobayashi T."/>
            <person name="Kobayashi M."/>
            <person name="Okazaki T."/>
            <person name="Ohara I."/>
            <person name="Nakayama I."/>
        </authorList>
    </citation>
    <scope>NUCLEOTIDE SEQUENCE [LARGE SCALE GENOMIC DNA]</scope>
    <source>
        <strain>U-51</strain>
    </source>
</reference>
<name>PSAK_PYRYE</name>
<accession>Q1XDB7</accession>
<comment type="subcellular location">
    <subcellularLocation>
        <location evidence="1">Plastid</location>
        <location evidence="1">Chloroplast thylakoid membrane</location>
        <topology evidence="1">Single-pass membrane protein</topology>
    </subcellularLocation>
</comment>
<comment type="similarity">
    <text evidence="1">Belongs to the PsaG/PsaK family.</text>
</comment>
<organism>
    <name type="scientific">Pyropia yezoensis</name>
    <name type="common">Susabi-nori</name>
    <name type="synonym">Porphyra yezoensis</name>
    <dbReference type="NCBI Taxonomy" id="2788"/>
    <lineage>
        <taxon>Eukaryota</taxon>
        <taxon>Rhodophyta</taxon>
        <taxon>Bangiophyceae</taxon>
        <taxon>Bangiales</taxon>
        <taxon>Bangiaceae</taxon>
        <taxon>Pyropia</taxon>
    </lineage>
</organism>
<dbReference type="EMBL" id="AP006715">
    <property type="protein sequence ID" value="BAE92494.1"/>
    <property type="molecule type" value="Genomic_DNA"/>
</dbReference>
<dbReference type="RefSeq" id="YP_537051.1">
    <property type="nucleotide sequence ID" value="NC_007932.1"/>
</dbReference>
<dbReference type="SMR" id="Q1XDB7"/>
<dbReference type="GeneID" id="3978954"/>
<dbReference type="GO" id="GO:0009535">
    <property type="term" value="C:chloroplast thylakoid membrane"/>
    <property type="evidence" value="ECO:0007669"/>
    <property type="project" value="UniProtKB-SubCell"/>
</dbReference>
<dbReference type="GO" id="GO:0009522">
    <property type="term" value="C:photosystem I"/>
    <property type="evidence" value="ECO:0007669"/>
    <property type="project" value="UniProtKB-KW"/>
</dbReference>
<dbReference type="GO" id="GO:0015979">
    <property type="term" value="P:photosynthesis"/>
    <property type="evidence" value="ECO:0007669"/>
    <property type="project" value="UniProtKB-UniRule"/>
</dbReference>
<dbReference type="Gene3D" id="1.20.860.20">
    <property type="entry name" value="Photosystem I PsaK, reaction centre"/>
    <property type="match status" value="1"/>
</dbReference>
<dbReference type="HAMAP" id="MF_00474">
    <property type="entry name" value="PSI_PsaK"/>
    <property type="match status" value="1"/>
</dbReference>
<dbReference type="InterPro" id="IPR035982">
    <property type="entry name" value="PSI_centre_PsaK_sf"/>
</dbReference>
<dbReference type="InterPro" id="IPR000549">
    <property type="entry name" value="PSI_PsaG/PsaK"/>
</dbReference>
<dbReference type="InterPro" id="IPR017492">
    <property type="entry name" value="PSI_PsaK"/>
</dbReference>
<dbReference type="InterPro" id="IPR037101">
    <property type="entry name" value="PSI_PsaK_bact"/>
</dbReference>
<dbReference type="NCBIfam" id="TIGR03049">
    <property type="entry name" value="PS_I_psaK"/>
    <property type="match status" value="1"/>
</dbReference>
<dbReference type="Pfam" id="PF01241">
    <property type="entry name" value="PSI_PSAK"/>
    <property type="match status" value="1"/>
</dbReference>
<dbReference type="SUPFAM" id="SSF81563">
    <property type="entry name" value="Photosystem I reaction center subunit X, PsaK"/>
    <property type="match status" value="1"/>
</dbReference>
<dbReference type="PROSITE" id="PS01026">
    <property type="entry name" value="PHOTOSYSTEM_I_PSAGK"/>
    <property type="match status" value="1"/>
</dbReference>
<sequence>MNILFVLSSVPHTSPWSTQVAMVMITCNLLAIVAGRYAIKVRGLGPSIPVSGVEGFGLPELLATTSLGHVIGAASILGLSNVGLIS</sequence>
<evidence type="ECO:0000255" key="1">
    <source>
        <dbReference type="HAMAP-Rule" id="MF_00474"/>
    </source>
</evidence>
<geneLocation type="chloroplast"/>
<gene>
    <name evidence="1" type="primary">psaK</name>
</gene>
<keyword id="KW-0150">Chloroplast</keyword>
<keyword id="KW-0472">Membrane</keyword>
<keyword id="KW-0602">Photosynthesis</keyword>
<keyword id="KW-0603">Photosystem I</keyword>
<keyword id="KW-0934">Plastid</keyword>
<keyword id="KW-0793">Thylakoid</keyword>
<keyword id="KW-0812">Transmembrane</keyword>
<keyword id="KW-1133">Transmembrane helix</keyword>
<protein>
    <recommendedName>
        <fullName evidence="1">Photosystem I reaction center subunit PsaK</fullName>
    </recommendedName>
    <alternativeName>
        <fullName evidence="1">PSI-K</fullName>
    </alternativeName>
    <alternativeName>
        <fullName evidence="1">Photosystem I subunit X</fullName>
    </alternativeName>
</protein>
<proteinExistence type="inferred from homology"/>